<proteinExistence type="inferred from homology"/>
<gene>
    <name type="primary">ycjQ</name>
    <name type="ordered locus">SF1318.1</name>
    <name type="ordered locus">S1402</name>
</gene>
<name>YCJQ_SHIFL</name>
<comment type="function">
    <text evidence="1">Catalyzes the NAD(+)-dependent oxidation of the hydroxyl group at C3 of D-gulosides leading to 3-dehydro-D-gulosides. Probably functions in a metabolic pathway that transforms D-gulosides to D-glucosides. Is also able to catalyze the reverse reactions, i.e. the NADH-dependent reduction of the oxo group at C3 of 3-dehydro-D-gulosides leading to D-gulosides. In vitro, can oxidize D-gulose and methyl beta-D-guloside, and reduce methyl alpha-3-dehydro-D-guloside and methyl beta-3-dehydro-D-guloside. However, the actual specific physiological substrates for this metabolic pathway are unknown.</text>
</comment>
<comment type="catalytic activity">
    <reaction evidence="1">
        <text>a D-guloside + NAD(+) = a 3-dehydro-D-guloside + NADH + H(+)</text>
        <dbReference type="Rhea" id="RHEA:61720"/>
        <dbReference type="ChEBI" id="CHEBI:15378"/>
        <dbReference type="ChEBI" id="CHEBI:57540"/>
        <dbReference type="ChEBI" id="CHEBI:57945"/>
        <dbReference type="ChEBI" id="CHEBI:145014"/>
        <dbReference type="ChEBI" id="CHEBI:145016"/>
    </reaction>
</comment>
<comment type="cofactor">
    <cofactor evidence="1">
        <name>Zn(2+)</name>
        <dbReference type="ChEBI" id="CHEBI:29105"/>
    </cofactor>
    <text evidence="1">Binds 1 Zn(2+) ions per subunit.</text>
</comment>
<comment type="similarity">
    <text evidence="2">Belongs to the zinc-containing alcohol dehydrogenase family.</text>
</comment>
<reference key="1">
    <citation type="journal article" date="2002" name="Nucleic Acids Res.">
        <title>Genome sequence of Shigella flexneri 2a: insights into pathogenicity through comparison with genomes of Escherichia coli K12 and O157.</title>
        <authorList>
            <person name="Jin Q."/>
            <person name="Yuan Z."/>
            <person name="Xu J."/>
            <person name="Wang Y."/>
            <person name="Shen Y."/>
            <person name="Lu W."/>
            <person name="Wang J."/>
            <person name="Liu H."/>
            <person name="Yang J."/>
            <person name="Yang F."/>
            <person name="Zhang X."/>
            <person name="Zhang J."/>
            <person name="Yang G."/>
            <person name="Wu H."/>
            <person name="Qu D."/>
            <person name="Dong J."/>
            <person name="Sun L."/>
            <person name="Xue Y."/>
            <person name="Zhao A."/>
            <person name="Gao Y."/>
            <person name="Zhu J."/>
            <person name="Kan B."/>
            <person name="Ding K."/>
            <person name="Chen S."/>
            <person name="Cheng H."/>
            <person name="Yao Z."/>
            <person name="He B."/>
            <person name="Chen R."/>
            <person name="Ma D."/>
            <person name="Qiang B."/>
            <person name="Wen Y."/>
            <person name="Hou Y."/>
            <person name="Yu J."/>
        </authorList>
    </citation>
    <scope>NUCLEOTIDE SEQUENCE [LARGE SCALE GENOMIC DNA]</scope>
    <source>
        <strain>301 / Serotype 2a</strain>
    </source>
</reference>
<reference key="2">
    <citation type="journal article" date="2003" name="Infect. Immun.">
        <title>Complete genome sequence and comparative genomics of Shigella flexneri serotype 2a strain 2457T.</title>
        <authorList>
            <person name="Wei J."/>
            <person name="Goldberg M.B."/>
            <person name="Burland V."/>
            <person name="Venkatesan M.M."/>
            <person name="Deng W."/>
            <person name="Fournier G."/>
            <person name="Mayhew G.F."/>
            <person name="Plunkett G. III"/>
            <person name="Rose D.J."/>
            <person name="Darling A."/>
            <person name="Mau B."/>
            <person name="Perna N.T."/>
            <person name="Payne S.M."/>
            <person name="Runyen-Janecky L.J."/>
            <person name="Zhou S."/>
            <person name="Schwartz D.C."/>
            <person name="Blattner F.R."/>
        </authorList>
    </citation>
    <scope>NUCLEOTIDE SEQUENCE [LARGE SCALE GENOMIC DNA]</scope>
    <source>
        <strain>ATCC 700930 / 2457T / Serotype 2a</strain>
    </source>
</reference>
<accession>Q83RK8</accession>
<evidence type="ECO:0000250" key="1">
    <source>
        <dbReference type="UniProtKB" id="P76043"/>
    </source>
</evidence>
<evidence type="ECO:0000305" key="2"/>
<keyword id="KW-0119">Carbohydrate metabolism</keyword>
<keyword id="KW-0479">Metal-binding</keyword>
<keyword id="KW-0520">NAD</keyword>
<keyword id="KW-0560">Oxidoreductase</keyword>
<keyword id="KW-1185">Reference proteome</keyword>
<keyword id="KW-0862">Zinc</keyword>
<feature type="chain" id="PRO_0000160891" description="D-guloside 3-dehydrogenase">
    <location>
        <begin position="1"/>
        <end position="350"/>
    </location>
</feature>
<feature type="sequence conflict" description="In Ref. 2; AAP16811." evidence="2" ref="2">
    <original>N</original>
    <variation>D</variation>
    <location>
        <position position="141"/>
    </location>
</feature>
<protein>
    <recommendedName>
        <fullName evidence="1">D-guloside 3-dehydrogenase</fullName>
        <ecNumber evidence="1">1.1.1.-</ecNumber>
    </recommendedName>
</protein>
<organism>
    <name type="scientific">Shigella flexneri</name>
    <dbReference type="NCBI Taxonomy" id="623"/>
    <lineage>
        <taxon>Bacteria</taxon>
        <taxon>Pseudomonadati</taxon>
        <taxon>Pseudomonadota</taxon>
        <taxon>Gammaproteobacteria</taxon>
        <taxon>Enterobacterales</taxon>
        <taxon>Enterobacteriaceae</taxon>
        <taxon>Shigella</taxon>
    </lineage>
</organism>
<dbReference type="EC" id="1.1.1.-" evidence="1"/>
<dbReference type="EMBL" id="AE005674">
    <property type="protein sequence ID" value="AAN42928.1"/>
    <property type="molecule type" value="Genomic_DNA"/>
</dbReference>
<dbReference type="EMBL" id="AE014073">
    <property type="protein sequence ID" value="AAP16811.1"/>
    <property type="molecule type" value="Genomic_DNA"/>
</dbReference>
<dbReference type="RefSeq" id="NP_707221.1">
    <property type="nucleotide sequence ID" value="NC_004337.2"/>
</dbReference>
<dbReference type="RefSeq" id="WP_000737354.1">
    <property type="nucleotide sequence ID" value="NZ_CP123365.1"/>
</dbReference>
<dbReference type="SMR" id="Q83RK8"/>
<dbReference type="STRING" id="198214.SF1319"/>
<dbReference type="PaxDb" id="198214-SF1319"/>
<dbReference type="DNASU" id="1077776"/>
<dbReference type="GeneID" id="1023364"/>
<dbReference type="KEGG" id="sfl:SF1319"/>
<dbReference type="KEGG" id="sfx:S1402"/>
<dbReference type="PATRIC" id="fig|198214.7.peg.1549"/>
<dbReference type="HOGENOM" id="CLU_026673_9_0_6"/>
<dbReference type="Proteomes" id="UP000001006">
    <property type="component" value="Chromosome"/>
</dbReference>
<dbReference type="Proteomes" id="UP000002673">
    <property type="component" value="Chromosome"/>
</dbReference>
<dbReference type="GO" id="GO:0046872">
    <property type="term" value="F:metal ion binding"/>
    <property type="evidence" value="ECO:0007669"/>
    <property type="project" value="UniProtKB-KW"/>
</dbReference>
<dbReference type="GO" id="GO:0016491">
    <property type="term" value="F:oxidoreductase activity"/>
    <property type="evidence" value="ECO:0007669"/>
    <property type="project" value="UniProtKB-KW"/>
</dbReference>
<dbReference type="CDD" id="cd08255">
    <property type="entry name" value="2-desacetyl-2-hydroxyethyl_bacteriochlorophyllide_like"/>
    <property type="match status" value="1"/>
</dbReference>
<dbReference type="Gene3D" id="3.90.180.10">
    <property type="entry name" value="Medium-chain alcohol dehydrogenases, catalytic domain"/>
    <property type="match status" value="2"/>
</dbReference>
<dbReference type="Gene3D" id="3.40.50.720">
    <property type="entry name" value="NAD(P)-binding Rossmann-like Domain"/>
    <property type="match status" value="1"/>
</dbReference>
<dbReference type="InterPro" id="IPR013149">
    <property type="entry name" value="ADH-like_C"/>
</dbReference>
<dbReference type="InterPro" id="IPR011032">
    <property type="entry name" value="GroES-like_sf"/>
</dbReference>
<dbReference type="InterPro" id="IPR036291">
    <property type="entry name" value="NAD(P)-bd_dom_sf"/>
</dbReference>
<dbReference type="PANTHER" id="PTHR43350:SF19">
    <property type="entry name" value="D-GULOSIDE 3-DEHYDROGENASE"/>
    <property type="match status" value="1"/>
</dbReference>
<dbReference type="PANTHER" id="PTHR43350">
    <property type="entry name" value="NAD-DEPENDENT ALCOHOL DEHYDROGENASE"/>
    <property type="match status" value="1"/>
</dbReference>
<dbReference type="Pfam" id="PF00107">
    <property type="entry name" value="ADH_zinc_N"/>
    <property type="match status" value="1"/>
</dbReference>
<dbReference type="SUPFAM" id="SSF50129">
    <property type="entry name" value="GroES-like"/>
    <property type="match status" value="1"/>
</dbReference>
<dbReference type="SUPFAM" id="SSF51735">
    <property type="entry name" value="NAD(P)-binding Rossmann-fold domains"/>
    <property type="match status" value="1"/>
</dbReference>
<sequence>MKKLVATAPRVAALVEYEDRAILANEVKIRVRFGAPKHGTEVVDFRAASPFIDEDFNGEWQMFTPRPADAPRGIEFGKFQLGNMVVGDIIECGSDVTDYAVGDSVCGYGPLSETVIINAVNNYKLRKMPQGSSWKNAVCYNPAQFAMSGVRDANVRVGDFVVVVGLGAIGQIAIQLAKRAGASVVIGVDPIAHRCDIARRHGADFCLNPIGTDVGKEIKTLTGKQGADVIIETSGYADALQSALRGLAYGGTISYVAFAKPFAEGFNLGREAHFNNAKIVFSRACSEPNPDYPRWSRKRIEETCWELLMNGYLNCEDLIDPVVTFANSPESYMQYVDQHPEQSIKMGVTF</sequence>